<name>UDG_RICTY</name>
<protein>
    <recommendedName>
        <fullName>UDP-glucose 6-dehydrogenase</fullName>
        <shortName>UDP-Glc dehydrogenase</shortName>
        <shortName>UDP-GlcDH</shortName>
        <shortName>UDPGDH</shortName>
        <ecNumber>1.1.1.22</ecNumber>
    </recommendedName>
</protein>
<feature type="chain" id="PRO_0000281046" description="UDP-glucose 6-dehydrogenase">
    <location>
        <begin position="1"/>
        <end position="434"/>
    </location>
</feature>
<feature type="active site" description="Nucleophile" evidence="1">
    <location>
        <position position="260"/>
    </location>
</feature>
<feature type="binding site" evidence="2">
    <location>
        <begin position="2"/>
        <end position="19"/>
    </location>
    <ligand>
        <name>NAD(+)</name>
        <dbReference type="ChEBI" id="CHEBI:57540"/>
    </ligand>
</feature>
<feature type="binding site" evidence="1">
    <location>
        <position position="11"/>
    </location>
    <ligand>
        <name>NAD(+)</name>
        <dbReference type="ChEBI" id="CHEBI:57540"/>
    </ligand>
</feature>
<feature type="binding site" evidence="1">
    <location>
        <position position="30"/>
    </location>
    <ligand>
        <name>NAD(+)</name>
        <dbReference type="ChEBI" id="CHEBI:57540"/>
    </ligand>
</feature>
<feature type="binding site" evidence="1">
    <location>
        <position position="35"/>
    </location>
    <ligand>
        <name>NAD(+)</name>
        <dbReference type="ChEBI" id="CHEBI:57540"/>
    </ligand>
</feature>
<feature type="binding site" evidence="1">
    <location>
        <position position="121"/>
    </location>
    <ligand>
        <name>NAD(+)</name>
        <dbReference type="ChEBI" id="CHEBI:57540"/>
    </ligand>
</feature>
<feature type="binding site" evidence="1">
    <location>
        <begin position="148"/>
        <end position="152"/>
    </location>
    <ligand>
        <name>substrate</name>
    </ligand>
</feature>
<feature type="binding site" evidence="1">
    <location>
        <position position="152"/>
    </location>
    <ligand>
        <name>NAD(+)</name>
        <dbReference type="ChEBI" id="CHEBI:57540"/>
    </ligand>
</feature>
<feature type="binding site" evidence="1">
    <location>
        <position position="204"/>
    </location>
    <ligand>
        <name>substrate</name>
    </ligand>
</feature>
<feature type="binding site" evidence="1">
    <location>
        <position position="208"/>
    </location>
    <ligand>
        <name>substrate</name>
    </ligand>
</feature>
<feature type="binding site" evidence="1">
    <location>
        <begin position="249"/>
        <end position="253"/>
    </location>
    <ligand>
        <name>substrate</name>
    </ligand>
</feature>
<feature type="binding site" evidence="1">
    <location>
        <position position="257"/>
    </location>
    <ligand>
        <name>substrate</name>
    </ligand>
</feature>
<feature type="binding site" evidence="1">
    <location>
        <position position="263"/>
    </location>
    <ligand>
        <name>NAD(+)</name>
        <dbReference type="ChEBI" id="CHEBI:57540"/>
    </ligand>
</feature>
<feature type="binding site" evidence="1">
    <location>
        <position position="321"/>
    </location>
    <ligand>
        <name>substrate</name>
    </ligand>
</feature>
<feature type="binding site" evidence="1">
    <location>
        <position position="328"/>
    </location>
    <ligand>
        <name>NAD(+)</name>
        <dbReference type="ChEBI" id="CHEBI:57540"/>
    </ligand>
</feature>
<proteinExistence type="inferred from homology"/>
<accession>Q68VX0</accession>
<reference key="1">
    <citation type="journal article" date="2004" name="J. Bacteriol.">
        <title>Complete genome sequence of Rickettsia typhi and comparison with sequences of other Rickettsiae.</title>
        <authorList>
            <person name="McLeod M.P."/>
            <person name="Qin X."/>
            <person name="Karpathy S.E."/>
            <person name="Gioia J."/>
            <person name="Highlander S.K."/>
            <person name="Fox G.E."/>
            <person name="McNeill T.Z."/>
            <person name="Jiang H."/>
            <person name="Muzny D."/>
            <person name="Jacob L.S."/>
            <person name="Hawes A.C."/>
            <person name="Sodergren E."/>
            <person name="Gill R."/>
            <person name="Hume J."/>
            <person name="Morgan M."/>
            <person name="Fan G."/>
            <person name="Amin A.G."/>
            <person name="Gibbs R.A."/>
            <person name="Hong C."/>
            <person name="Yu X.-J."/>
            <person name="Walker D.H."/>
            <person name="Weinstock G.M."/>
        </authorList>
    </citation>
    <scope>NUCLEOTIDE SEQUENCE [LARGE SCALE GENOMIC DNA]</scope>
    <source>
        <strain>ATCC VR-144 / Wilmington</strain>
    </source>
</reference>
<keyword id="KW-0520">NAD</keyword>
<keyword id="KW-0560">Oxidoreductase</keyword>
<sequence length="434" mass="48146">MNITFIGSGYVGLVSGIIMGYLGHNVTCFDNDDVKISKLNKKILPIYEAKLDEYLKQALESDRLKFTNIYSNDFRNVDAVFITVGTPSKELGEADLKYVYDAVDKVSKHINKDCLIVIKSTVPPGSCNNIIAYLKAKGFSFNVASNPEFLREGSAVEDFLYPDRIVVGVNNQESEALLRTIYAPLIEQGVKFLVTNLVTSELIKYASNSFLATKIAFINEMADLCEKIGANIKDLSQGVGLDQRIGRNFLNAGPGFGGSCFPKDILALNNLVENYKIDCKILKSVIKSNKLRPGNMVAKIATLLDGDLKGRNIAILGLTYKAGTDDVRASPAIEIITILLNKDVYVKAFDPIGLENAKKNLEHKNLLYFASAVEACESVDIIVIATEWSEFKELNWQEIYDLVKSPMIIDLRNILDNEVMKKIGFRYYAVGSKI</sequence>
<dbReference type="EC" id="1.1.1.22"/>
<dbReference type="EMBL" id="AE017197">
    <property type="protein sequence ID" value="AAU04222.1"/>
    <property type="molecule type" value="Genomic_DNA"/>
</dbReference>
<dbReference type="RefSeq" id="WP_011191197.1">
    <property type="nucleotide sequence ID" value="NC_006142.1"/>
</dbReference>
<dbReference type="SMR" id="Q68VX0"/>
<dbReference type="KEGG" id="rty:RT0766"/>
<dbReference type="eggNOG" id="COG1004">
    <property type="taxonomic scope" value="Bacteria"/>
</dbReference>
<dbReference type="HOGENOM" id="CLU_023810_1_2_5"/>
<dbReference type="OrthoDB" id="9803238at2"/>
<dbReference type="UniPathway" id="UPA00038">
    <property type="reaction ID" value="UER00491"/>
</dbReference>
<dbReference type="Proteomes" id="UP000000604">
    <property type="component" value="Chromosome"/>
</dbReference>
<dbReference type="GO" id="GO:0051287">
    <property type="term" value="F:NAD binding"/>
    <property type="evidence" value="ECO:0000250"/>
    <property type="project" value="UniProtKB"/>
</dbReference>
<dbReference type="GO" id="GO:0003979">
    <property type="term" value="F:UDP-glucose 6-dehydrogenase activity"/>
    <property type="evidence" value="ECO:0000250"/>
    <property type="project" value="UniProtKB"/>
</dbReference>
<dbReference type="GO" id="GO:0000271">
    <property type="term" value="P:polysaccharide biosynthetic process"/>
    <property type="evidence" value="ECO:0007669"/>
    <property type="project" value="InterPro"/>
</dbReference>
<dbReference type="GO" id="GO:0006065">
    <property type="term" value="P:UDP-glucuronate biosynthetic process"/>
    <property type="evidence" value="ECO:0007669"/>
    <property type="project" value="UniProtKB-UniPathway"/>
</dbReference>
<dbReference type="Gene3D" id="1.20.5.100">
    <property type="entry name" value="Cytochrome c1, transmembrane anchor, C-terminal"/>
    <property type="match status" value="1"/>
</dbReference>
<dbReference type="Gene3D" id="3.40.50.720">
    <property type="entry name" value="NAD(P)-binding Rossmann-like Domain"/>
    <property type="match status" value="2"/>
</dbReference>
<dbReference type="InterPro" id="IPR008927">
    <property type="entry name" value="6-PGluconate_DH-like_C_sf"/>
</dbReference>
<dbReference type="InterPro" id="IPR036291">
    <property type="entry name" value="NAD(P)-bd_dom_sf"/>
</dbReference>
<dbReference type="InterPro" id="IPR017476">
    <property type="entry name" value="UDP-Glc/GDP-Man"/>
</dbReference>
<dbReference type="InterPro" id="IPR014027">
    <property type="entry name" value="UDP-Glc/GDP-Man_DH_C"/>
</dbReference>
<dbReference type="InterPro" id="IPR036220">
    <property type="entry name" value="UDP-Glc/GDP-Man_DH_C_sf"/>
</dbReference>
<dbReference type="InterPro" id="IPR014026">
    <property type="entry name" value="UDP-Glc/GDP-Man_DH_dimer"/>
</dbReference>
<dbReference type="InterPro" id="IPR001732">
    <property type="entry name" value="UDP-Glc/GDP-Man_DH_N"/>
</dbReference>
<dbReference type="InterPro" id="IPR028357">
    <property type="entry name" value="UDPglc_DH_bac"/>
</dbReference>
<dbReference type="NCBIfam" id="TIGR03026">
    <property type="entry name" value="NDP-sugDHase"/>
    <property type="match status" value="1"/>
</dbReference>
<dbReference type="PANTHER" id="PTHR43750">
    <property type="entry name" value="UDP-GLUCOSE 6-DEHYDROGENASE TUAD"/>
    <property type="match status" value="1"/>
</dbReference>
<dbReference type="PANTHER" id="PTHR43750:SF3">
    <property type="entry name" value="UDP-GLUCOSE 6-DEHYDROGENASE TUAD"/>
    <property type="match status" value="1"/>
</dbReference>
<dbReference type="Pfam" id="PF00984">
    <property type="entry name" value="UDPG_MGDP_dh"/>
    <property type="match status" value="1"/>
</dbReference>
<dbReference type="Pfam" id="PF03720">
    <property type="entry name" value="UDPG_MGDP_dh_C"/>
    <property type="match status" value="1"/>
</dbReference>
<dbReference type="Pfam" id="PF03721">
    <property type="entry name" value="UDPG_MGDP_dh_N"/>
    <property type="match status" value="1"/>
</dbReference>
<dbReference type="PIRSF" id="PIRSF500134">
    <property type="entry name" value="UDPglc_DH_bac"/>
    <property type="match status" value="1"/>
</dbReference>
<dbReference type="PIRSF" id="PIRSF000124">
    <property type="entry name" value="UDPglc_GDPman_dh"/>
    <property type="match status" value="1"/>
</dbReference>
<dbReference type="SMART" id="SM00984">
    <property type="entry name" value="UDPG_MGDP_dh_C"/>
    <property type="match status" value="1"/>
</dbReference>
<dbReference type="SUPFAM" id="SSF48179">
    <property type="entry name" value="6-phosphogluconate dehydrogenase C-terminal domain-like"/>
    <property type="match status" value="1"/>
</dbReference>
<dbReference type="SUPFAM" id="SSF51735">
    <property type="entry name" value="NAD(P)-binding Rossmann-fold domains"/>
    <property type="match status" value="1"/>
</dbReference>
<dbReference type="SUPFAM" id="SSF52413">
    <property type="entry name" value="UDP-glucose/GDP-mannose dehydrogenase C-terminal domain"/>
    <property type="match status" value="1"/>
</dbReference>
<comment type="catalytic activity">
    <reaction>
        <text>UDP-alpha-D-glucose + 2 NAD(+) + H2O = UDP-alpha-D-glucuronate + 2 NADH + 3 H(+)</text>
        <dbReference type="Rhea" id="RHEA:23596"/>
        <dbReference type="ChEBI" id="CHEBI:15377"/>
        <dbReference type="ChEBI" id="CHEBI:15378"/>
        <dbReference type="ChEBI" id="CHEBI:57540"/>
        <dbReference type="ChEBI" id="CHEBI:57945"/>
        <dbReference type="ChEBI" id="CHEBI:58052"/>
        <dbReference type="ChEBI" id="CHEBI:58885"/>
        <dbReference type="EC" id="1.1.1.22"/>
    </reaction>
</comment>
<comment type="pathway">
    <text>Nucleotide-sugar biosynthesis; UDP-alpha-D-glucuronate biosynthesis; UDP-alpha-D-glucuronate from UDP-alpha-D-glucose: step 1/1.</text>
</comment>
<comment type="similarity">
    <text evidence="3">Belongs to the UDP-glucose/GDP-mannose dehydrogenase family.</text>
</comment>
<organism>
    <name type="scientific">Rickettsia typhi (strain ATCC VR-144 / Wilmington)</name>
    <dbReference type="NCBI Taxonomy" id="257363"/>
    <lineage>
        <taxon>Bacteria</taxon>
        <taxon>Pseudomonadati</taxon>
        <taxon>Pseudomonadota</taxon>
        <taxon>Alphaproteobacteria</taxon>
        <taxon>Rickettsiales</taxon>
        <taxon>Rickettsiaceae</taxon>
        <taxon>Rickettsieae</taxon>
        <taxon>Rickettsia</taxon>
        <taxon>typhus group</taxon>
    </lineage>
</organism>
<evidence type="ECO:0000250" key="1">
    <source>
        <dbReference type="UniProtKB" id="Q0P8H3"/>
    </source>
</evidence>
<evidence type="ECO:0000255" key="2"/>
<evidence type="ECO:0000305" key="3"/>
<gene>
    <name type="primary">udg</name>
    <name type="ordered locus">RT0766</name>
</gene>